<proteinExistence type="evidence at transcript level"/>
<keyword id="KW-0539">Nucleus</keyword>
<keyword id="KW-1185">Reference proteome</keyword>
<organism>
    <name type="scientific">Mus musculus</name>
    <name type="common">Mouse</name>
    <dbReference type="NCBI Taxonomy" id="10090"/>
    <lineage>
        <taxon>Eukaryota</taxon>
        <taxon>Metazoa</taxon>
        <taxon>Chordata</taxon>
        <taxon>Craniata</taxon>
        <taxon>Vertebrata</taxon>
        <taxon>Euteleostomi</taxon>
        <taxon>Mammalia</taxon>
        <taxon>Eutheria</taxon>
        <taxon>Euarchontoglires</taxon>
        <taxon>Glires</taxon>
        <taxon>Rodentia</taxon>
        <taxon>Myomorpha</taxon>
        <taxon>Muroidea</taxon>
        <taxon>Muridae</taxon>
        <taxon>Murinae</taxon>
        <taxon>Mus</taxon>
        <taxon>Mus</taxon>
    </lineage>
</organism>
<feature type="chain" id="PRO_0000435468" description="Protein Tex24">
    <location>
        <begin position="1"/>
        <end position="351"/>
    </location>
</feature>
<feature type="region of interest" description="Disordered" evidence="1">
    <location>
        <begin position="69"/>
        <end position="101"/>
    </location>
</feature>
<feature type="region of interest" description="Disordered" evidence="1">
    <location>
        <begin position="117"/>
        <end position="144"/>
    </location>
</feature>
<feature type="region of interest" description="Disordered" evidence="1">
    <location>
        <begin position="275"/>
        <end position="298"/>
    </location>
</feature>
<feature type="compositionally biased region" description="Basic residues" evidence="1">
    <location>
        <begin position="73"/>
        <end position="83"/>
    </location>
</feature>
<feature type="compositionally biased region" description="Basic and acidic residues" evidence="1">
    <location>
        <begin position="275"/>
        <end position="285"/>
    </location>
</feature>
<sequence>MGSQSLNSTFLKVRRLSLISSNERLLGQTSGLATGSRLVTQEVDDLRVIPGSRPDLDDHQPQCSLAELPSTAHGKRKPGHLPRLRSSAVKGHAPDPNPSLSIVSKRIFKGESVIKGPEDRQTFVGPSGLPKISPKATAGEAQGKKRTMELLNKARKQEEKVSNLLDIRQLPKQEVFINNTHPCKKHLKQQPMSLEEWRRGHLGGDNTGLISQEPFRCCKRLGKKAQCQLLEVTSLEAEASLEVLKRRRRMQAMEMSKKPQDRGLGQEKAVFLSREKVKPSSHDMHLSTAERSFKPKSMPKAEDWDLSVQGTPVVLTVRDHSNVSQAQKHLGCAEIFHSRDGRCTLLKRGGA</sequence>
<evidence type="ECO:0000256" key="1">
    <source>
        <dbReference type="SAM" id="MobiDB-lite"/>
    </source>
</evidence>
<evidence type="ECO:0000269" key="2">
    <source>
    </source>
</evidence>
<evidence type="ECO:0000303" key="3">
    <source>
    </source>
</evidence>
<evidence type="ECO:0000305" key="4"/>
<evidence type="ECO:0000305" key="5">
    <source>
    </source>
</evidence>
<evidence type="ECO:0000312" key="6">
    <source>
        <dbReference type="EMBL" id="AAI39072.1"/>
    </source>
</evidence>
<evidence type="ECO:0000312" key="7">
    <source>
        <dbReference type="EMBL" id="AAT36321.1"/>
    </source>
</evidence>
<evidence type="ECO:0000312" key="8">
    <source>
        <dbReference type="MGI" id="MGI:1921539"/>
    </source>
</evidence>
<evidence type="ECO:0000312" key="9">
    <source>
        <dbReference type="Proteomes" id="UP000000589"/>
    </source>
</evidence>
<name>TEX24_MOUSE</name>
<reference evidence="7" key="1">
    <citation type="journal article" date="2006" name="Biochem. Biophys. Res. Commun.">
        <title>Identification of a novel male germ cell-specific gene TESF-1 in mice.</title>
        <authorList>
            <person name="Fan J."/>
            <person name="Graham M."/>
            <person name="Akabane H."/>
            <person name="Richardson L.L."/>
            <person name="Zhu G.Z."/>
        </authorList>
    </citation>
    <scope>NUCLEOTIDE SEQUENCE [MRNA]</scope>
    <scope>PUTATIVE FUNCTION</scope>
    <scope>SUBCELLULAR LOCATION</scope>
    <scope>TISSUE SPECIFICITY</scope>
    <source>
        <strain evidence="7">BALB/cJ</strain>
        <tissue evidence="7">Testis</tissue>
    </source>
</reference>
<reference evidence="9" key="2">
    <citation type="journal article" date="2009" name="PLoS Biol.">
        <title>Lineage-specific biology revealed by a finished genome assembly of the mouse.</title>
        <authorList>
            <person name="Church D.M."/>
            <person name="Goodstadt L."/>
            <person name="Hillier L.W."/>
            <person name="Zody M.C."/>
            <person name="Goldstein S."/>
            <person name="She X."/>
            <person name="Bult C.J."/>
            <person name="Agarwala R."/>
            <person name="Cherry J.L."/>
            <person name="DiCuccio M."/>
            <person name="Hlavina W."/>
            <person name="Kapustin Y."/>
            <person name="Meric P."/>
            <person name="Maglott D."/>
            <person name="Birtle Z."/>
            <person name="Marques A.C."/>
            <person name="Graves T."/>
            <person name="Zhou S."/>
            <person name="Teague B."/>
            <person name="Potamousis K."/>
            <person name="Churas C."/>
            <person name="Place M."/>
            <person name="Herschleb J."/>
            <person name="Runnheim R."/>
            <person name="Forrest D."/>
            <person name="Amos-Landgraf J."/>
            <person name="Schwartz D.C."/>
            <person name="Cheng Z."/>
            <person name="Lindblad-Toh K."/>
            <person name="Eichler E.E."/>
            <person name="Ponting C.P."/>
        </authorList>
    </citation>
    <scope>NUCLEOTIDE SEQUENCE [LARGE SCALE GENOMIC DNA]</scope>
    <source>
        <strain>C57BL/6J</strain>
    </source>
</reference>
<reference evidence="6" key="3">
    <citation type="journal article" date="2004" name="Genome Res.">
        <title>The status, quality, and expansion of the NIH full-length cDNA project: the Mammalian Gene Collection (MGC).</title>
        <authorList>
            <consortium name="The MGC Project Team"/>
        </authorList>
    </citation>
    <scope>NUCLEOTIDE SEQUENCE [LARGE SCALE MRNA]</scope>
    <source>
        <tissue>Testis</tissue>
    </source>
</reference>
<comment type="function">
    <text evidence="5">Nuclear factor which might have a role in spermatogenesis.</text>
</comment>
<comment type="subcellular location">
    <subcellularLocation>
        <location evidence="2">Nucleus</location>
    </subcellularLocation>
</comment>
<comment type="tissue specificity">
    <text evidence="2">Specific to testis, where it is expressed in spermatogonia.</text>
</comment>
<comment type="developmental stage">
    <text evidence="2">Detected in testis from postnatal day 20 onwards.</text>
</comment>
<gene>
    <name evidence="8" type="primary">Tex24</name>
    <name evidence="3" type="synonym">TESF-1</name>
</gene>
<protein>
    <recommendedName>
        <fullName evidence="4">Protein Tex24</fullName>
    </recommendedName>
    <alternativeName>
        <fullName evidence="8">Testis-expressed protein 24</fullName>
    </alternativeName>
    <alternativeName>
        <fullName evidence="3">Testis-specific factor 1</fullName>
    </alternativeName>
</protein>
<accession>Q5DP50</accession>
<dbReference type="EMBL" id="AY552600">
    <property type="protein sequence ID" value="AAT36321.1"/>
    <property type="molecule type" value="mRNA"/>
</dbReference>
<dbReference type="EMBL" id="AC102544">
    <property type="status" value="NOT_ANNOTATED_CDS"/>
    <property type="molecule type" value="Genomic_DNA"/>
</dbReference>
<dbReference type="EMBL" id="BC139071">
    <property type="protein sequence ID" value="AAI39072.1"/>
    <property type="molecule type" value="mRNA"/>
</dbReference>
<dbReference type="EMBL" id="BC139072">
    <property type="protein sequence ID" value="AAI39073.1"/>
    <property type="molecule type" value="mRNA"/>
</dbReference>
<dbReference type="CCDS" id="CCDS22215.1"/>
<dbReference type="RefSeq" id="NP_001013627.1">
    <property type="nucleotide sequence ID" value="NM_001013609.2"/>
</dbReference>
<dbReference type="RefSeq" id="XP_006509234.1">
    <property type="nucleotide sequence ID" value="XM_006509171.2"/>
</dbReference>
<dbReference type="SMR" id="Q5DP50"/>
<dbReference type="FunCoup" id="Q5DP50">
    <property type="interactions" value="8"/>
</dbReference>
<dbReference type="STRING" id="10090.ENSMUSP00000093021"/>
<dbReference type="iPTMnet" id="Q5DP50"/>
<dbReference type="PhosphoSitePlus" id="Q5DP50"/>
<dbReference type="PaxDb" id="10090-ENSMUSP00000093021"/>
<dbReference type="ProteomicsDB" id="259006"/>
<dbReference type="DNASU" id="541463"/>
<dbReference type="GeneID" id="541463"/>
<dbReference type="KEGG" id="mmu:541463"/>
<dbReference type="UCSC" id="uc009lir.1">
    <property type="organism name" value="mouse"/>
</dbReference>
<dbReference type="AGR" id="MGI:1921539"/>
<dbReference type="CTD" id="541463"/>
<dbReference type="MGI" id="MGI:1921539">
    <property type="gene designation" value="Tex24"/>
</dbReference>
<dbReference type="VEuPathDB" id="HostDB:ENSMUSG00000071138"/>
<dbReference type="HOGENOM" id="CLU_789783_0_0_1"/>
<dbReference type="InParanoid" id="Q5DP50"/>
<dbReference type="OrthoDB" id="33102at9989"/>
<dbReference type="BioGRID-ORCS" id="541463">
    <property type="hits" value="3 hits in 76 CRISPR screens"/>
</dbReference>
<dbReference type="PRO" id="PR:Q5DP50"/>
<dbReference type="Proteomes" id="UP000000589">
    <property type="component" value="Chromosome 8"/>
</dbReference>
<dbReference type="RNAct" id="Q5DP50">
    <property type="molecule type" value="protein"/>
</dbReference>
<dbReference type="Bgee" id="ENSMUSG00000071138">
    <property type="expression patterns" value="Expressed in seminiferous tubule of testis and 20 other cell types or tissues"/>
</dbReference>
<dbReference type="GO" id="GO:0005634">
    <property type="term" value="C:nucleus"/>
    <property type="evidence" value="ECO:0000314"/>
    <property type="project" value="MGI"/>
</dbReference>